<gene>
    <name evidence="1" type="primary">mdtK</name>
    <name type="ordered locus">SeHA_C1558</name>
</gene>
<comment type="function">
    <text evidence="1">Multidrug efflux pump that functions probably as a Na(+)/drug antiporter.</text>
</comment>
<comment type="subcellular location">
    <subcellularLocation>
        <location evidence="1">Cell inner membrane</location>
        <topology evidence="1">Multi-pass membrane protein</topology>
    </subcellularLocation>
</comment>
<comment type="similarity">
    <text evidence="1">Belongs to the multi antimicrobial extrusion (MATE) (TC 2.A.66.1) family. MdtK subfamily.</text>
</comment>
<reference key="1">
    <citation type="journal article" date="2011" name="J. Bacteriol.">
        <title>Comparative genomics of 28 Salmonella enterica isolates: evidence for CRISPR-mediated adaptive sublineage evolution.</title>
        <authorList>
            <person name="Fricke W.F."/>
            <person name="Mammel M.K."/>
            <person name="McDermott P.F."/>
            <person name="Tartera C."/>
            <person name="White D.G."/>
            <person name="Leclerc J.E."/>
            <person name="Ravel J."/>
            <person name="Cebula T.A."/>
        </authorList>
    </citation>
    <scope>NUCLEOTIDE SEQUENCE [LARGE SCALE GENOMIC DNA]</scope>
    <source>
        <strain>SL476</strain>
    </source>
</reference>
<protein>
    <recommendedName>
        <fullName evidence="1">Multidrug resistance protein MdtK</fullName>
    </recommendedName>
    <alternativeName>
        <fullName evidence="1">Multidrug-efflux transporter</fullName>
    </alternativeName>
</protein>
<name>MDTK_SALHS</name>
<evidence type="ECO:0000255" key="1">
    <source>
        <dbReference type="HAMAP-Rule" id="MF_00400"/>
    </source>
</evidence>
<dbReference type="EMBL" id="CP001120">
    <property type="protein sequence ID" value="ACF69174.1"/>
    <property type="molecule type" value="Genomic_DNA"/>
</dbReference>
<dbReference type="RefSeq" id="WP_001175072.1">
    <property type="nucleotide sequence ID" value="NC_011083.1"/>
</dbReference>
<dbReference type="SMR" id="B4TH65"/>
<dbReference type="KEGG" id="seh:SeHA_C1558"/>
<dbReference type="HOGENOM" id="CLU_012893_6_0_6"/>
<dbReference type="Proteomes" id="UP000001866">
    <property type="component" value="Chromosome"/>
</dbReference>
<dbReference type="GO" id="GO:0005886">
    <property type="term" value="C:plasma membrane"/>
    <property type="evidence" value="ECO:0007669"/>
    <property type="project" value="UniProtKB-SubCell"/>
</dbReference>
<dbReference type="GO" id="GO:0015297">
    <property type="term" value="F:antiporter activity"/>
    <property type="evidence" value="ECO:0007669"/>
    <property type="project" value="UniProtKB-UniRule"/>
</dbReference>
<dbReference type="GO" id="GO:0042910">
    <property type="term" value="F:xenobiotic transmembrane transporter activity"/>
    <property type="evidence" value="ECO:0007669"/>
    <property type="project" value="UniProtKB-UniRule"/>
</dbReference>
<dbReference type="GO" id="GO:0006814">
    <property type="term" value="P:sodium ion transport"/>
    <property type="evidence" value="ECO:0007669"/>
    <property type="project" value="UniProtKB-UniRule"/>
</dbReference>
<dbReference type="GO" id="GO:0006855">
    <property type="term" value="P:xenobiotic transmembrane transport"/>
    <property type="evidence" value="ECO:0007669"/>
    <property type="project" value="UniProtKB-UniRule"/>
</dbReference>
<dbReference type="CDD" id="cd13131">
    <property type="entry name" value="MATE_NorM_like"/>
    <property type="match status" value="1"/>
</dbReference>
<dbReference type="HAMAP" id="MF_00400">
    <property type="entry name" value="MdtK"/>
    <property type="match status" value="1"/>
</dbReference>
<dbReference type="InterPro" id="IPR002528">
    <property type="entry name" value="MATE_fam"/>
</dbReference>
<dbReference type="InterPro" id="IPR050222">
    <property type="entry name" value="MATE_MdtK"/>
</dbReference>
<dbReference type="InterPro" id="IPR048279">
    <property type="entry name" value="MdtK-like"/>
</dbReference>
<dbReference type="InterPro" id="IPR022913">
    <property type="entry name" value="Multidrug-R_MdtK"/>
</dbReference>
<dbReference type="NCBIfam" id="TIGR00797">
    <property type="entry name" value="matE"/>
    <property type="match status" value="1"/>
</dbReference>
<dbReference type="PANTHER" id="PTHR43298:SF2">
    <property type="entry name" value="FMN_FAD EXPORTER YEEO-RELATED"/>
    <property type="match status" value="1"/>
</dbReference>
<dbReference type="PANTHER" id="PTHR43298">
    <property type="entry name" value="MULTIDRUG RESISTANCE PROTEIN NORM-RELATED"/>
    <property type="match status" value="1"/>
</dbReference>
<dbReference type="Pfam" id="PF01554">
    <property type="entry name" value="MatE"/>
    <property type="match status" value="2"/>
</dbReference>
<dbReference type="PIRSF" id="PIRSF006603">
    <property type="entry name" value="DinF"/>
    <property type="match status" value="1"/>
</dbReference>
<keyword id="KW-0050">Antiport</keyword>
<keyword id="KW-0997">Cell inner membrane</keyword>
<keyword id="KW-1003">Cell membrane</keyword>
<keyword id="KW-0406">Ion transport</keyword>
<keyword id="KW-0472">Membrane</keyword>
<keyword id="KW-0915">Sodium</keyword>
<keyword id="KW-0739">Sodium transport</keyword>
<keyword id="KW-0812">Transmembrane</keyword>
<keyword id="KW-1133">Transmembrane helix</keyword>
<keyword id="KW-0813">Transport</keyword>
<organism>
    <name type="scientific">Salmonella heidelberg (strain SL476)</name>
    <dbReference type="NCBI Taxonomy" id="454169"/>
    <lineage>
        <taxon>Bacteria</taxon>
        <taxon>Pseudomonadati</taxon>
        <taxon>Pseudomonadota</taxon>
        <taxon>Gammaproteobacteria</taxon>
        <taxon>Enterobacterales</taxon>
        <taxon>Enterobacteriaceae</taxon>
        <taxon>Salmonella</taxon>
    </lineage>
</organism>
<feature type="chain" id="PRO_1000191104" description="Multidrug resistance protein MdtK">
    <location>
        <begin position="1"/>
        <end position="457"/>
    </location>
</feature>
<feature type="transmembrane region" description="Helical" evidence="1">
    <location>
        <begin position="11"/>
        <end position="31"/>
    </location>
</feature>
<feature type="transmembrane region" description="Helical" evidence="1">
    <location>
        <begin position="53"/>
        <end position="73"/>
    </location>
</feature>
<feature type="transmembrane region" description="Helical" evidence="1">
    <location>
        <begin position="93"/>
        <end position="113"/>
    </location>
</feature>
<feature type="transmembrane region" description="Helical" evidence="1">
    <location>
        <begin position="127"/>
        <end position="147"/>
    </location>
</feature>
<feature type="transmembrane region" description="Helical" evidence="1">
    <location>
        <begin position="160"/>
        <end position="180"/>
    </location>
</feature>
<feature type="transmembrane region" description="Helical" evidence="1">
    <location>
        <begin position="188"/>
        <end position="208"/>
    </location>
</feature>
<feature type="transmembrane region" description="Helical" evidence="1">
    <location>
        <begin position="243"/>
        <end position="263"/>
    </location>
</feature>
<feature type="transmembrane region" description="Helical" evidence="1">
    <location>
        <begin position="276"/>
        <end position="296"/>
    </location>
</feature>
<feature type="transmembrane region" description="Helical" evidence="1">
    <location>
        <begin position="314"/>
        <end position="334"/>
    </location>
</feature>
<feature type="transmembrane region" description="Helical" evidence="1">
    <location>
        <begin position="350"/>
        <end position="370"/>
    </location>
</feature>
<feature type="transmembrane region" description="Helical" evidence="1">
    <location>
        <begin position="387"/>
        <end position="407"/>
    </location>
</feature>
<feature type="transmembrane region" description="Helical" evidence="1">
    <location>
        <begin position="418"/>
        <end position="438"/>
    </location>
</feature>
<sequence>MQKYTSEARQLLALAIPVILAQVAQTAMGFVDTVMAGGYSATDMAAVAIGTSIWLPAILFGHGLLLALTPVIAQLNGSGRRERIAHQVRQGFWLAGFVSVLVMIVLWNAGYIIRSMHNIDPALADKAVGYLRALLWGAPGYLFFQVARNQCEGLAKTKPGMVMGFLGLLVNIPVNYIFIYGHFGMPELGGIGCGVATAAVYWVMFIAMLSYIKHARSMRDIRNEKGFGKPDSVAMKRLIQLGLPIALALFFEVTLFAVVALLVSPLGIVDVAGHQIALNFSSLMFVLPMSLAAAVTIRVGYRLGQGSTLDAQTAARTGLGVGICMAVVTAIFTVTLRKHIALLYNDNPEVVALAAQLMLLAAVYQISDSIQVIGSGILRGYKDTRSIFFITFTAYWVLGLPSGYILALTDLVVDRMGPAGFWMGFIIGLTSAAVLMMLRMRYLQRQPSAIILQRAAR</sequence>
<proteinExistence type="inferred from homology"/>
<accession>B4TH65</accession>